<dbReference type="EMBL" id="CP000438">
    <property type="protein sequence ID" value="ABJ14868.1"/>
    <property type="molecule type" value="Genomic_DNA"/>
</dbReference>
<dbReference type="RefSeq" id="WP_003096961.1">
    <property type="nucleotide sequence ID" value="NZ_CP034244.1"/>
</dbReference>
<dbReference type="KEGG" id="pau:PA14_72370"/>
<dbReference type="PseudoCAP" id="PA14_72370"/>
<dbReference type="HOGENOM" id="CLU_187346_2_1_6"/>
<dbReference type="BioCyc" id="PAER208963:G1G74-6088-MONOMER"/>
<dbReference type="Proteomes" id="UP000000653">
    <property type="component" value="Chromosome"/>
</dbReference>
<dbReference type="GO" id="GO:0005886">
    <property type="term" value="C:plasma membrane"/>
    <property type="evidence" value="ECO:0007669"/>
    <property type="project" value="UniProtKB-SubCell"/>
</dbReference>
<dbReference type="HAMAP" id="MF_01361">
    <property type="entry name" value="UPF0391"/>
    <property type="match status" value="1"/>
</dbReference>
<dbReference type="InterPro" id="IPR009760">
    <property type="entry name" value="DUF1328"/>
</dbReference>
<dbReference type="NCBIfam" id="NF010226">
    <property type="entry name" value="PRK13682.1-1"/>
    <property type="match status" value="1"/>
</dbReference>
<dbReference type="NCBIfam" id="NF010228">
    <property type="entry name" value="PRK13682.1-3"/>
    <property type="match status" value="1"/>
</dbReference>
<dbReference type="NCBIfam" id="NF010229">
    <property type="entry name" value="PRK13682.1-4"/>
    <property type="match status" value="1"/>
</dbReference>
<dbReference type="Pfam" id="PF07043">
    <property type="entry name" value="DUF1328"/>
    <property type="match status" value="1"/>
</dbReference>
<dbReference type="PIRSF" id="PIRSF036466">
    <property type="entry name" value="UCP036466"/>
    <property type="match status" value="1"/>
</dbReference>
<sequence length="53" mass="5647">MLSWAITFLIIAIIAAVLGFGGIAGAATGIAKILFVLFLVLFVVSFFFGRRRG</sequence>
<keyword id="KW-1003">Cell membrane</keyword>
<keyword id="KW-0472">Membrane</keyword>
<keyword id="KW-0812">Transmembrane</keyword>
<keyword id="KW-1133">Transmembrane helix</keyword>
<proteinExistence type="inferred from homology"/>
<organism>
    <name type="scientific">Pseudomonas aeruginosa (strain UCBPP-PA14)</name>
    <dbReference type="NCBI Taxonomy" id="208963"/>
    <lineage>
        <taxon>Bacteria</taxon>
        <taxon>Pseudomonadati</taxon>
        <taxon>Pseudomonadota</taxon>
        <taxon>Gammaproteobacteria</taxon>
        <taxon>Pseudomonadales</taxon>
        <taxon>Pseudomonadaceae</taxon>
        <taxon>Pseudomonas</taxon>
    </lineage>
</organism>
<reference key="1">
    <citation type="journal article" date="2006" name="Genome Biol.">
        <title>Genomic analysis reveals that Pseudomonas aeruginosa virulence is combinatorial.</title>
        <authorList>
            <person name="Lee D.G."/>
            <person name="Urbach J.M."/>
            <person name="Wu G."/>
            <person name="Liberati N.T."/>
            <person name="Feinbaum R.L."/>
            <person name="Miyata S."/>
            <person name="Diggins L.T."/>
            <person name="He J."/>
            <person name="Saucier M."/>
            <person name="Deziel E."/>
            <person name="Friedman L."/>
            <person name="Li L."/>
            <person name="Grills G."/>
            <person name="Montgomery K."/>
            <person name="Kucherlapati R."/>
            <person name="Rahme L.G."/>
            <person name="Ausubel F.M."/>
        </authorList>
    </citation>
    <scope>NUCLEOTIDE SEQUENCE [LARGE SCALE GENOMIC DNA]</scope>
    <source>
        <strain>UCBPP-PA14</strain>
    </source>
</reference>
<comment type="subcellular location">
    <subcellularLocation>
        <location evidence="1">Cell membrane</location>
        <topology evidence="1">Multi-pass membrane protein</topology>
    </subcellularLocation>
</comment>
<comment type="similarity">
    <text evidence="1">Belongs to the UPF0391 family.</text>
</comment>
<accession>Q02DM7</accession>
<name>Y7237_PSEAB</name>
<feature type="chain" id="PRO_0000298597" description="UPF0391 membrane protein PA14_72370">
    <location>
        <begin position="1"/>
        <end position="53"/>
    </location>
</feature>
<feature type="transmembrane region" description="Helical" evidence="1">
    <location>
        <begin position="4"/>
        <end position="24"/>
    </location>
</feature>
<feature type="transmembrane region" description="Helical" evidence="1">
    <location>
        <begin position="29"/>
        <end position="49"/>
    </location>
</feature>
<evidence type="ECO:0000255" key="1">
    <source>
        <dbReference type="HAMAP-Rule" id="MF_01361"/>
    </source>
</evidence>
<protein>
    <recommendedName>
        <fullName evidence="1">UPF0391 membrane protein PA14_72370</fullName>
    </recommendedName>
</protein>
<gene>
    <name type="ordered locus">PA14_72370</name>
</gene>